<protein>
    <recommendedName>
        <fullName evidence="1">Orotidine 5'-phosphate decarboxylase</fullName>
        <ecNumber evidence="1">4.1.1.23</ecNumber>
    </recommendedName>
    <alternativeName>
        <fullName evidence="1">OMP decarboxylase</fullName>
        <shortName evidence="1">OMPDCase</shortName>
        <shortName evidence="1">OMPdecase</shortName>
    </alternativeName>
</protein>
<comment type="function">
    <text evidence="1">Catalyzes the decarboxylation of orotidine 5'-monophosphate (OMP) to uridine 5'-monophosphate (UMP).</text>
</comment>
<comment type="catalytic activity">
    <reaction evidence="1">
        <text>orotidine 5'-phosphate + H(+) = UMP + CO2</text>
        <dbReference type="Rhea" id="RHEA:11596"/>
        <dbReference type="ChEBI" id="CHEBI:15378"/>
        <dbReference type="ChEBI" id="CHEBI:16526"/>
        <dbReference type="ChEBI" id="CHEBI:57538"/>
        <dbReference type="ChEBI" id="CHEBI:57865"/>
        <dbReference type="EC" id="4.1.1.23"/>
    </reaction>
</comment>
<comment type="pathway">
    <text evidence="1">Pyrimidine metabolism; UMP biosynthesis via de novo pathway; UMP from orotate: step 2/2.</text>
</comment>
<comment type="subunit">
    <text evidence="1">Homodimer.</text>
</comment>
<comment type="similarity">
    <text evidence="1">Belongs to the OMP decarboxylase family. Type 1 subfamily.</text>
</comment>
<name>PYRF_BRUMB</name>
<organism>
    <name type="scientific">Brucella melitensis biotype 2 (strain ATCC 23457)</name>
    <dbReference type="NCBI Taxonomy" id="546272"/>
    <lineage>
        <taxon>Bacteria</taxon>
        <taxon>Pseudomonadati</taxon>
        <taxon>Pseudomonadota</taxon>
        <taxon>Alphaproteobacteria</taxon>
        <taxon>Hyphomicrobiales</taxon>
        <taxon>Brucellaceae</taxon>
        <taxon>Brucella/Ochrobactrum group</taxon>
        <taxon>Brucella</taxon>
    </lineage>
</organism>
<dbReference type="EC" id="4.1.1.23" evidence="1"/>
<dbReference type="EMBL" id="CP001488">
    <property type="protein sequence ID" value="ACO01835.1"/>
    <property type="molecule type" value="Genomic_DNA"/>
</dbReference>
<dbReference type="RefSeq" id="WP_004684566.1">
    <property type="nucleotide sequence ID" value="NC_012441.1"/>
</dbReference>
<dbReference type="SMR" id="C0RG13"/>
<dbReference type="GeneID" id="29594882"/>
<dbReference type="KEGG" id="bmi:BMEA_A2190"/>
<dbReference type="HOGENOM" id="CLU_067069_1_0_5"/>
<dbReference type="UniPathway" id="UPA00070">
    <property type="reaction ID" value="UER00120"/>
</dbReference>
<dbReference type="Proteomes" id="UP000001748">
    <property type="component" value="Chromosome I"/>
</dbReference>
<dbReference type="GO" id="GO:0005829">
    <property type="term" value="C:cytosol"/>
    <property type="evidence" value="ECO:0007669"/>
    <property type="project" value="TreeGrafter"/>
</dbReference>
<dbReference type="GO" id="GO:0004590">
    <property type="term" value="F:orotidine-5'-phosphate decarboxylase activity"/>
    <property type="evidence" value="ECO:0007669"/>
    <property type="project" value="UniProtKB-UniRule"/>
</dbReference>
<dbReference type="GO" id="GO:0006207">
    <property type="term" value="P:'de novo' pyrimidine nucleobase biosynthetic process"/>
    <property type="evidence" value="ECO:0007669"/>
    <property type="project" value="InterPro"/>
</dbReference>
<dbReference type="GO" id="GO:0044205">
    <property type="term" value="P:'de novo' UMP biosynthetic process"/>
    <property type="evidence" value="ECO:0007669"/>
    <property type="project" value="UniProtKB-UniRule"/>
</dbReference>
<dbReference type="CDD" id="cd04725">
    <property type="entry name" value="OMP_decarboxylase_like"/>
    <property type="match status" value="1"/>
</dbReference>
<dbReference type="Gene3D" id="3.20.20.70">
    <property type="entry name" value="Aldolase class I"/>
    <property type="match status" value="1"/>
</dbReference>
<dbReference type="HAMAP" id="MF_01200_B">
    <property type="entry name" value="OMPdecase_type1_B"/>
    <property type="match status" value="1"/>
</dbReference>
<dbReference type="InterPro" id="IPR013785">
    <property type="entry name" value="Aldolase_TIM"/>
</dbReference>
<dbReference type="InterPro" id="IPR014732">
    <property type="entry name" value="OMPdecase"/>
</dbReference>
<dbReference type="InterPro" id="IPR018089">
    <property type="entry name" value="OMPdecase_AS"/>
</dbReference>
<dbReference type="InterPro" id="IPR047596">
    <property type="entry name" value="OMPdecase_bac"/>
</dbReference>
<dbReference type="InterPro" id="IPR001754">
    <property type="entry name" value="OMPdeCOase_dom"/>
</dbReference>
<dbReference type="InterPro" id="IPR011060">
    <property type="entry name" value="RibuloseP-bd_barrel"/>
</dbReference>
<dbReference type="NCBIfam" id="NF001273">
    <property type="entry name" value="PRK00230.1"/>
    <property type="match status" value="1"/>
</dbReference>
<dbReference type="NCBIfam" id="TIGR01740">
    <property type="entry name" value="pyrF"/>
    <property type="match status" value="1"/>
</dbReference>
<dbReference type="PANTHER" id="PTHR32119">
    <property type="entry name" value="OROTIDINE 5'-PHOSPHATE DECARBOXYLASE"/>
    <property type="match status" value="1"/>
</dbReference>
<dbReference type="PANTHER" id="PTHR32119:SF2">
    <property type="entry name" value="OROTIDINE 5'-PHOSPHATE DECARBOXYLASE"/>
    <property type="match status" value="1"/>
</dbReference>
<dbReference type="Pfam" id="PF00215">
    <property type="entry name" value="OMPdecase"/>
    <property type="match status" value="1"/>
</dbReference>
<dbReference type="SMART" id="SM00934">
    <property type="entry name" value="OMPdecase"/>
    <property type="match status" value="1"/>
</dbReference>
<dbReference type="SUPFAM" id="SSF51366">
    <property type="entry name" value="Ribulose-phoshate binding barrel"/>
    <property type="match status" value="1"/>
</dbReference>
<dbReference type="PROSITE" id="PS00156">
    <property type="entry name" value="OMPDECASE"/>
    <property type="match status" value="1"/>
</dbReference>
<sequence>MTTELHDDASGRLIVGLDVPTIAEAEKVVEELGNAVSFYKIGYQLVFAGGLDFAKSLVAARKKVFLDMKLLDIDNTIAKGVENVAKMGVSMLTLHAYPKAMRAAVEAARGSDLCLLGVTVLTSMDNADLREAGYFDNAETLVLKRARQAHEAGMGGIVASAVEAQAIRQAVGPDMAIVTPGIRPAGSEKGDQKRVMTPADALRAGASHLIVARPIVGAPDRKAAALAILKEMRSIGRS</sequence>
<accession>C0RG13</accession>
<reference key="1">
    <citation type="submission" date="2009-03" db="EMBL/GenBank/DDBJ databases">
        <title>Brucella melitensis ATCC 23457 whole genome shotgun sequencing project.</title>
        <authorList>
            <person name="Setubal J.C."/>
            <person name="Boyle S."/>
            <person name="Crasta O.R."/>
            <person name="Gillespie J.J."/>
            <person name="Kenyon R.W."/>
            <person name="Lu J."/>
            <person name="Mane S."/>
            <person name="Nagrani S."/>
            <person name="Shallom J.M."/>
            <person name="Shallom S."/>
            <person name="Shukla M."/>
            <person name="Snyder E.E."/>
            <person name="Sobral B.W."/>
            <person name="Wattam A.R."/>
            <person name="Will R."/>
            <person name="Williams K."/>
            <person name="Yoo H."/>
            <person name="Munk C."/>
            <person name="Tapia R."/>
            <person name="Han C."/>
            <person name="Detter J.C."/>
            <person name="Bruce D."/>
            <person name="Brettin T.S."/>
        </authorList>
    </citation>
    <scope>NUCLEOTIDE SEQUENCE [LARGE SCALE GENOMIC DNA]</scope>
    <source>
        <strain>ATCC 23457</strain>
    </source>
</reference>
<gene>
    <name evidence="1" type="primary">pyrF</name>
    <name type="ordered locus">BMEA_A2190</name>
</gene>
<keyword id="KW-0210">Decarboxylase</keyword>
<keyword id="KW-0456">Lyase</keyword>
<keyword id="KW-0665">Pyrimidine biosynthesis</keyword>
<evidence type="ECO:0000255" key="1">
    <source>
        <dbReference type="HAMAP-Rule" id="MF_01200"/>
    </source>
</evidence>
<feature type="chain" id="PRO_1000164561" description="Orotidine 5'-phosphate decarboxylase">
    <location>
        <begin position="1"/>
        <end position="238"/>
    </location>
</feature>
<feature type="active site" description="Proton donor" evidence="1">
    <location>
        <position position="69"/>
    </location>
</feature>
<feature type="binding site" evidence="1">
    <location>
        <position position="18"/>
    </location>
    <ligand>
        <name>substrate</name>
    </ligand>
</feature>
<feature type="binding site" evidence="1">
    <location>
        <position position="40"/>
    </location>
    <ligand>
        <name>substrate</name>
    </ligand>
</feature>
<feature type="binding site" evidence="1">
    <location>
        <begin position="67"/>
        <end position="76"/>
    </location>
    <ligand>
        <name>substrate</name>
    </ligand>
</feature>
<feature type="binding site" evidence="1">
    <location>
        <position position="122"/>
    </location>
    <ligand>
        <name>substrate</name>
    </ligand>
</feature>
<feature type="binding site" evidence="1">
    <location>
        <position position="183"/>
    </location>
    <ligand>
        <name>substrate</name>
    </ligand>
</feature>
<feature type="binding site" evidence="1">
    <location>
        <position position="192"/>
    </location>
    <ligand>
        <name>substrate</name>
    </ligand>
</feature>
<feature type="binding site" evidence="1">
    <location>
        <position position="213"/>
    </location>
    <ligand>
        <name>substrate</name>
    </ligand>
</feature>
<proteinExistence type="inferred from homology"/>